<comment type="function">
    <text evidence="1">Catalyzes the hydrolysis of esters.</text>
</comment>
<comment type="catalytic activity">
    <reaction evidence="1">
        <text>a carboxylic ester + H2O = an alcohol + a carboxylate + H(+)</text>
        <dbReference type="Rhea" id="RHEA:21164"/>
        <dbReference type="ChEBI" id="CHEBI:15377"/>
        <dbReference type="ChEBI" id="CHEBI:15378"/>
        <dbReference type="ChEBI" id="CHEBI:29067"/>
        <dbReference type="ChEBI" id="CHEBI:30879"/>
        <dbReference type="ChEBI" id="CHEBI:33308"/>
        <dbReference type="EC" id="3.1.1.1"/>
    </reaction>
</comment>
<comment type="similarity">
    <text evidence="1">Belongs to the FrsA family.</text>
</comment>
<accession>Q1CLC9</accession>
<accession>C4GQE0</accession>
<name>FRSA_YERPN</name>
<feature type="chain" id="PRO_1000064495" description="Esterase FrsA">
    <location>
        <begin position="1"/>
        <end position="415"/>
    </location>
</feature>
<evidence type="ECO:0000255" key="1">
    <source>
        <dbReference type="HAMAP-Rule" id="MF_01063"/>
    </source>
</evidence>
<protein>
    <recommendedName>
        <fullName evidence="1">Esterase FrsA</fullName>
        <ecNumber evidence="1">3.1.1.1</ecNumber>
    </recommendedName>
</protein>
<reference key="1">
    <citation type="journal article" date="2006" name="J. Bacteriol.">
        <title>Complete genome sequence of Yersinia pestis strains Antiqua and Nepal516: evidence of gene reduction in an emerging pathogen.</title>
        <authorList>
            <person name="Chain P.S.G."/>
            <person name="Hu P."/>
            <person name="Malfatti S.A."/>
            <person name="Radnedge L."/>
            <person name="Larimer F."/>
            <person name="Vergez L.M."/>
            <person name="Worsham P."/>
            <person name="Chu M.C."/>
            <person name="Andersen G.L."/>
        </authorList>
    </citation>
    <scope>NUCLEOTIDE SEQUENCE [LARGE SCALE GENOMIC DNA]</scope>
    <source>
        <strain>Nepal516</strain>
    </source>
</reference>
<reference key="2">
    <citation type="submission" date="2009-04" db="EMBL/GenBank/DDBJ databases">
        <title>Yersinia pestis Nepal516A whole genome shotgun sequencing project.</title>
        <authorList>
            <person name="Plunkett G. III"/>
            <person name="Anderson B.D."/>
            <person name="Baumler D.J."/>
            <person name="Burland V."/>
            <person name="Cabot E.L."/>
            <person name="Glasner J.D."/>
            <person name="Mau B."/>
            <person name="Neeno-Eckwall E."/>
            <person name="Perna N.T."/>
            <person name="Munk A.C."/>
            <person name="Tapia R."/>
            <person name="Green L.D."/>
            <person name="Rogers Y.C."/>
            <person name="Detter J.C."/>
            <person name="Bruce D.C."/>
            <person name="Brettin T.S."/>
        </authorList>
    </citation>
    <scope>NUCLEOTIDE SEQUENCE [LARGE SCALE GENOMIC DNA]</scope>
    <source>
        <strain>Nepal516</strain>
    </source>
</reference>
<proteinExistence type="inferred from homology"/>
<keyword id="KW-0378">Hydrolase</keyword>
<keyword id="KW-0719">Serine esterase</keyword>
<sequence length="415" mass="47007">MAQANLSEILFKPKFKHPETSTLVRRTHCNHVVNIHSALDGDTANHWYRMINRLMWTWRGIDPLEIEEVLSRIACSKAEHSNNELLDTVVGYRNGNWIYEWANQGMMWQQKAMEETDPGSAGQFWLNAANLYSIASYPHLKGDELSEQAEVLSNRAYEEAAKYLPYTLKELTFPISDGGSLSGFLHMPTVGSAPFPTVLMCGGLDTLQSDYHRLFRDYLEPKGIAMLTIDLPSVGASSRWKLTQDTSYLHQQVLQALADVPWVDHQRVSVFGFRFGANVAVRLGYLEPQRVRAVACLGPIVHHLLCNSDSLRKVPDMYMDVMASRLGMADSTDETLNTEMNRYSLKTQGLLGRRCQTPMLAGFWENDPFSPKEEAKLICSSSADGKLLAIPSKPLYENFHRALLQTSEWLEDKMR</sequence>
<gene>
    <name evidence="1" type="primary">frsA</name>
    <name type="ordered locus">YPN_0869</name>
    <name type="ORF">YP516_0940</name>
</gene>
<organism>
    <name type="scientific">Yersinia pestis bv. Antiqua (strain Nepal516)</name>
    <dbReference type="NCBI Taxonomy" id="377628"/>
    <lineage>
        <taxon>Bacteria</taxon>
        <taxon>Pseudomonadati</taxon>
        <taxon>Pseudomonadota</taxon>
        <taxon>Gammaproteobacteria</taxon>
        <taxon>Enterobacterales</taxon>
        <taxon>Yersiniaceae</taxon>
        <taxon>Yersinia</taxon>
    </lineage>
</organism>
<dbReference type="EC" id="3.1.1.1" evidence="1"/>
<dbReference type="EMBL" id="CP000305">
    <property type="protein sequence ID" value="ABG17201.1"/>
    <property type="molecule type" value="Genomic_DNA"/>
</dbReference>
<dbReference type="EMBL" id="ACNQ01000008">
    <property type="protein sequence ID" value="EEO77281.1"/>
    <property type="molecule type" value="Genomic_DNA"/>
</dbReference>
<dbReference type="RefSeq" id="WP_002208703.1">
    <property type="nucleotide sequence ID" value="NZ_ACNQ01000008.1"/>
</dbReference>
<dbReference type="SMR" id="Q1CLC9"/>
<dbReference type="ESTHER" id="yerpe-y3224">
    <property type="family name" value="Duf_1100-R"/>
</dbReference>
<dbReference type="GeneID" id="57975494"/>
<dbReference type="KEGG" id="ypn:YPN_0869"/>
<dbReference type="HOGENOM" id="CLU_036819_0_0_6"/>
<dbReference type="Proteomes" id="UP000008936">
    <property type="component" value="Chromosome"/>
</dbReference>
<dbReference type="GO" id="GO:0106435">
    <property type="term" value="F:carboxylesterase activity"/>
    <property type="evidence" value="ECO:0007669"/>
    <property type="project" value="UniProtKB-EC"/>
</dbReference>
<dbReference type="FunFam" id="3.40.50.1820:FF:000022">
    <property type="entry name" value="Esterase FrsA"/>
    <property type="match status" value="1"/>
</dbReference>
<dbReference type="Gene3D" id="3.40.50.1820">
    <property type="entry name" value="alpha/beta hydrolase"/>
    <property type="match status" value="1"/>
</dbReference>
<dbReference type="HAMAP" id="MF_01063">
    <property type="entry name" value="FrsA"/>
    <property type="match status" value="1"/>
</dbReference>
<dbReference type="InterPro" id="IPR029058">
    <property type="entry name" value="AB_hydrolase_fold"/>
</dbReference>
<dbReference type="InterPro" id="IPR043423">
    <property type="entry name" value="FrsA"/>
</dbReference>
<dbReference type="InterPro" id="IPR010520">
    <property type="entry name" value="FrsA-like"/>
</dbReference>
<dbReference type="InterPro" id="IPR050261">
    <property type="entry name" value="FrsA_esterase"/>
</dbReference>
<dbReference type="NCBIfam" id="NF003460">
    <property type="entry name" value="PRK05077.1"/>
    <property type="match status" value="1"/>
</dbReference>
<dbReference type="PANTHER" id="PTHR22946">
    <property type="entry name" value="DIENELACTONE HYDROLASE DOMAIN-CONTAINING PROTEIN-RELATED"/>
    <property type="match status" value="1"/>
</dbReference>
<dbReference type="PANTHER" id="PTHR22946:SF4">
    <property type="entry name" value="ESTERASE FRSA"/>
    <property type="match status" value="1"/>
</dbReference>
<dbReference type="Pfam" id="PF06500">
    <property type="entry name" value="FrsA-like"/>
    <property type="match status" value="1"/>
</dbReference>
<dbReference type="SUPFAM" id="SSF53474">
    <property type="entry name" value="alpha/beta-Hydrolases"/>
    <property type="match status" value="1"/>
</dbReference>